<dbReference type="EC" id="3.1.3.16"/>
<dbReference type="EMBL" id="AK041329">
    <property type="protein sequence ID" value="BAC30908.1"/>
    <property type="molecule type" value="mRNA"/>
</dbReference>
<dbReference type="EMBL" id="AK032288">
    <property type="protein sequence ID" value="BAC27795.1"/>
    <property type="molecule type" value="mRNA"/>
</dbReference>
<dbReference type="EMBL" id="AK049721">
    <property type="protein sequence ID" value="BAC33892.1"/>
    <property type="molecule type" value="mRNA"/>
</dbReference>
<dbReference type="EMBL" id="AK080876">
    <property type="protein sequence ID" value="BAC38056.1"/>
    <property type="molecule type" value="mRNA"/>
</dbReference>
<dbReference type="EMBL" id="AK134718">
    <property type="protein sequence ID" value="BAE22255.1"/>
    <property type="molecule type" value="mRNA"/>
</dbReference>
<dbReference type="EMBL" id="BC034347">
    <property type="protein sequence ID" value="AAH34347.1"/>
    <property type="molecule type" value="mRNA"/>
</dbReference>
<dbReference type="EMBL" id="BC025476">
    <property type="protein sequence ID" value="AAH25476.1"/>
    <property type="status" value="ALT_INIT"/>
    <property type="molecule type" value="mRNA"/>
</dbReference>
<dbReference type="CCDS" id="CCDS27964.1">
    <molecule id="Q8BFS6-1"/>
</dbReference>
<dbReference type="RefSeq" id="NP_001404626.1">
    <molecule id="Q8BFS6-2"/>
    <property type="nucleotide sequence ID" value="NM_001417697.1"/>
</dbReference>
<dbReference type="RefSeq" id="NP_666179.2">
    <molecule id="Q8BFS6-1"/>
    <property type="nucleotide sequence ID" value="NM_146067.3"/>
</dbReference>
<dbReference type="SMR" id="Q8BFS6"/>
<dbReference type="FunCoup" id="Q8BFS6">
    <property type="interactions" value="491"/>
</dbReference>
<dbReference type="STRING" id="10090.ENSMUSP00000093992"/>
<dbReference type="GlyGen" id="Q8BFS6">
    <property type="glycosylation" value="1 site, 1 O-linked glycan (1 site)"/>
</dbReference>
<dbReference type="iPTMnet" id="Q8BFS6"/>
<dbReference type="PhosphoSitePlus" id="Q8BFS6"/>
<dbReference type="SwissPalm" id="Q8BFS6"/>
<dbReference type="jPOST" id="Q8BFS6"/>
<dbReference type="PaxDb" id="10090-ENSMUSP00000093992"/>
<dbReference type="PeptideAtlas" id="Q8BFS6"/>
<dbReference type="ProteomicsDB" id="278022">
    <molecule id="Q8BFS6-1"/>
</dbReference>
<dbReference type="ProteomicsDB" id="278023">
    <molecule id="Q8BFS6-2"/>
</dbReference>
<dbReference type="ProteomicsDB" id="278024">
    <molecule id="Q8BFS6-3"/>
</dbReference>
<dbReference type="ProteomicsDB" id="278025">
    <molecule id="Q8BFS6-4"/>
</dbReference>
<dbReference type="ProteomicsDB" id="278026">
    <molecule id="Q8BFS6-5"/>
</dbReference>
<dbReference type="Pumba" id="Q8BFS6"/>
<dbReference type="Antibodypedia" id="24789">
    <property type="antibodies" value="141 antibodies from 23 providers"/>
</dbReference>
<dbReference type="DNASU" id="223978"/>
<dbReference type="Ensembl" id="ENSMUST00000073371.7">
    <molecule id="Q8BFS6-3"/>
    <property type="protein sequence ID" value="ENSMUSP00000089104.6"/>
    <property type="gene ID" value="ENSMUSG00000065979.13"/>
</dbReference>
<dbReference type="Ensembl" id="ENSMUST00000096272.11">
    <molecule id="Q8BFS6-1"/>
    <property type="protein sequence ID" value="ENSMUSP00000093992.5"/>
    <property type="gene ID" value="ENSMUSG00000065979.13"/>
</dbReference>
<dbReference type="Ensembl" id="ENSMUST00000121750.2">
    <molecule id="Q8BFS6-2"/>
    <property type="protein sequence ID" value="ENSMUSP00000112587.2"/>
    <property type="gene ID" value="ENSMUSG00000065979.13"/>
</dbReference>
<dbReference type="GeneID" id="223978"/>
<dbReference type="KEGG" id="mmu:223978"/>
<dbReference type="UCSC" id="uc007yfm.1">
    <molecule id="Q8BFS6-1"/>
    <property type="organism name" value="mouse"/>
</dbReference>
<dbReference type="UCSC" id="uc007yfn.1">
    <molecule id="Q8BFS6-2"/>
    <property type="organism name" value="mouse"/>
</dbReference>
<dbReference type="UCSC" id="uc007yfo.1">
    <molecule id="Q8BFS6-4"/>
    <property type="organism name" value="mouse"/>
</dbReference>
<dbReference type="UCSC" id="uc007yfp.1">
    <molecule id="Q8BFS6-3"/>
    <property type="organism name" value="mouse"/>
</dbReference>
<dbReference type="AGR" id="MGI:2443300"/>
<dbReference type="CTD" id="55313"/>
<dbReference type="MGI" id="MGI:2443300">
    <property type="gene designation" value="Cpped1"/>
</dbReference>
<dbReference type="VEuPathDB" id="HostDB:ENSMUSG00000065979"/>
<dbReference type="eggNOG" id="KOG1378">
    <property type="taxonomic scope" value="Eukaryota"/>
</dbReference>
<dbReference type="GeneTree" id="ENSGT00390000008676"/>
<dbReference type="HOGENOM" id="CLU_1712684_0_0_1"/>
<dbReference type="InParanoid" id="Q8BFS6"/>
<dbReference type="OMA" id="NEPTHET"/>
<dbReference type="OrthoDB" id="45007at2759"/>
<dbReference type="PhylomeDB" id="Q8BFS6"/>
<dbReference type="TreeFam" id="TF329406"/>
<dbReference type="Reactome" id="R-MMU-6798695">
    <property type="pathway name" value="Neutrophil degranulation"/>
</dbReference>
<dbReference type="BioGRID-ORCS" id="223978">
    <property type="hits" value="1 hit in 78 CRISPR screens"/>
</dbReference>
<dbReference type="ChiTaRS" id="Cpped1">
    <property type="organism name" value="mouse"/>
</dbReference>
<dbReference type="PRO" id="PR:Q8BFS6"/>
<dbReference type="Proteomes" id="UP000000589">
    <property type="component" value="Chromosome 16"/>
</dbReference>
<dbReference type="RNAct" id="Q8BFS6">
    <property type="molecule type" value="protein"/>
</dbReference>
<dbReference type="Bgee" id="ENSMUSG00000065979">
    <property type="expression patterns" value="Expressed in interventricular septum and 252 other cell types or tissues"/>
</dbReference>
<dbReference type="ExpressionAtlas" id="Q8BFS6">
    <property type="expression patterns" value="baseline and differential"/>
</dbReference>
<dbReference type="GO" id="GO:0005829">
    <property type="term" value="C:cytosol"/>
    <property type="evidence" value="ECO:0007669"/>
    <property type="project" value="Ensembl"/>
</dbReference>
<dbReference type="GO" id="GO:0005886">
    <property type="term" value="C:plasma membrane"/>
    <property type="evidence" value="ECO:0007669"/>
    <property type="project" value="Ensembl"/>
</dbReference>
<dbReference type="GO" id="GO:0046872">
    <property type="term" value="F:metal ion binding"/>
    <property type="evidence" value="ECO:0007669"/>
    <property type="project" value="UniProtKB-KW"/>
</dbReference>
<dbReference type="GO" id="GO:0004722">
    <property type="term" value="F:protein serine/threonine phosphatase activity"/>
    <property type="evidence" value="ECO:0007669"/>
    <property type="project" value="UniProtKB-EC"/>
</dbReference>
<dbReference type="CDD" id="cd07395">
    <property type="entry name" value="MPP_CSTP1"/>
    <property type="match status" value="1"/>
</dbReference>
<dbReference type="Gene3D" id="3.60.21.10">
    <property type="match status" value="1"/>
</dbReference>
<dbReference type="InterPro" id="IPR004843">
    <property type="entry name" value="Calcineurin-like_PHP_ApaH"/>
</dbReference>
<dbReference type="InterPro" id="IPR029052">
    <property type="entry name" value="Metallo-depent_PP-like"/>
</dbReference>
<dbReference type="InterPro" id="IPR041867">
    <property type="entry name" value="MPP_CSTP1"/>
</dbReference>
<dbReference type="InterPro" id="IPR051918">
    <property type="entry name" value="STPP_CPPED1"/>
</dbReference>
<dbReference type="PANTHER" id="PTHR43143">
    <property type="entry name" value="METALLOPHOSPHOESTERASE, CALCINEURIN SUPERFAMILY"/>
    <property type="match status" value="1"/>
</dbReference>
<dbReference type="PANTHER" id="PTHR43143:SF1">
    <property type="entry name" value="SERINE_THREONINE-PROTEIN PHOSPHATASE CPPED1"/>
    <property type="match status" value="1"/>
</dbReference>
<dbReference type="Pfam" id="PF00149">
    <property type="entry name" value="Metallophos"/>
    <property type="match status" value="1"/>
</dbReference>
<dbReference type="SUPFAM" id="SSF56300">
    <property type="entry name" value="Metallo-dependent phosphatases"/>
    <property type="match status" value="1"/>
</dbReference>
<accession>Q8BFS6</accession>
<accession>Q3UYF7</accession>
<accession>Q8BJQ3</accession>
<accession>Q8BYB7</accession>
<accession>Q8K236</accession>
<accession>Q8R3G2</accession>
<keyword id="KW-0025">Alternative splicing</keyword>
<keyword id="KW-0963">Cytoplasm</keyword>
<keyword id="KW-0378">Hydrolase</keyword>
<keyword id="KW-0479">Metal-binding</keyword>
<keyword id="KW-0597">Phosphoprotein</keyword>
<keyword id="KW-1185">Reference proteome</keyword>
<organism>
    <name type="scientific">Mus musculus</name>
    <name type="common">Mouse</name>
    <dbReference type="NCBI Taxonomy" id="10090"/>
    <lineage>
        <taxon>Eukaryota</taxon>
        <taxon>Metazoa</taxon>
        <taxon>Chordata</taxon>
        <taxon>Craniata</taxon>
        <taxon>Vertebrata</taxon>
        <taxon>Euteleostomi</taxon>
        <taxon>Mammalia</taxon>
        <taxon>Eutheria</taxon>
        <taxon>Euarchontoglires</taxon>
        <taxon>Glires</taxon>
        <taxon>Rodentia</taxon>
        <taxon>Myomorpha</taxon>
        <taxon>Muroidea</taxon>
        <taxon>Muridae</taxon>
        <taxon>Murinae</taxon>
        <taxon>Mus</taxon>
        <taxon>Mus</taxon>
    </lineage>
</organism>
<gene>
    <name type="primary">Cpped1</name>
    <name type="synonym">Cstp1</name>
</gene>
<sequence length="312" mass="35248">MSAMEAADVFHRARGRTLDAFSSEKEREWKGPFYFVQGADTQFGLMKAWSTGNCDAGGDEWGQEIRLTEQAVEAINKLNPKPKFFVLCGDLVHAMPGTPWRQEQTRDLQRVLKAVDQDIPLVMVSGNHDLGNAPTAETVEEFCQTWGDDYFSFWVGGVLFLVLNSQFLYDASRCPALKQAQDHWLDQQLNIAEQKQCQHAIVFQHIPLFLQSIDEDDDYFNLTKTVRKELAEKLTRAGIRAVFSGHYHRNAGGTYQNLDMVVSSAIGCQLGKDTHGLRVVAITAEKIVHRYYSLDELSQGGVEEDLKELLKE</sequence>
<proteinExistence type="evidence at protein level"/>
<name>CPPED_MOUSE</name>
<comment type="function">
    <text evidence="1">Protein phosphatase that dephosphorylates AKT family kinase specifically at 'Ser-473', blocking cell cycle progression and promoting cell apoptosis. May play an inhibitory role in glucose uptake by adipocytes (By similarity).</text>
</comment>
<comment type="catalytic activity">
    <reaction>
        <text>O-phospho-L-seryl-[protein] + H2O = L-seryl-[protein] + phosphate</text>
        <dbReference type="Rhea" id="RHEA:20629"/>
        <dbReference type="Rhea" id="RHEA-COMP:9863"/>
        <dbReference type="Rhea" id="RHEA-COMP:11604"/>
        <dbReference type="ChEBI" id="CHEBI:15377"/>
        <dbReference type="ChEBI" id="CHEBI:29999"/>
        <dbReference type="ChEBI" id="CHEBI:43474"/>
        <dbReference type="ChEBI" id="CHEBI:83421"/>
        <dbReference type="EC" id="3.1.3.16"/>
    </reaction>
</comment>
<comment type="catalytic activity">
    <reaction>
        <text>O-phospho-L-threonyl-[protein] + H2O = L-threonyl-[protein] + phosphate</text>
        <dbReference type="Rhea" id="RHEA:47004"/>
        <dbReference type="Rhea" id="RHEA-COMP:11060"/>
        <dbReference type="Rhea" id="RHEA-COMP:11605"/>
        <dbReference type="ChEBI" id="CHEBI:15377"/>
        <dbReference type="ChEBI" id="CHEBI:30013"/>
        <dbReference type="ChEBI" id="CHEBI:43474"/>
        <dbReference type="ChEBI" id="CHEBI:61977"/>
        <dbReference type="EC" id="3.1.3.16"/>
    </reaction>
</comment>
<comment type="cofactor">
    <cofactor evidence="1">
        <name>a divalent metal cation</name>
        <dbReference type="ChEBI" id="CHEBI:60240"/>
    </cofactor>
    <text evidence="1">Binds 2 divalent metal cations.</text>
</comment>
<comment type="subcellular location">
    <subcellularLocation>
        <location evidence="1">Cytoplasm</location>
    </subcellularLocation>
</comment>
<comment type="alternative products">
    <event type="alternative splicing"/>
    <isoform>
        <id>Q8BFS6-1</id>
        <name>1</name>
        <sequence type="displayed"/>
    </isoform>
    <isoform>
        <id>Q8BFS6-2</id>
        <name>2</name>
        <sequence type="described" ref="VSP_031660"/>
    </isoform>
    <isoform>
        <id>Q8BFS6-3</id>
        <name>3</name>
        <sequence type="described" ref="VSP_031661 VSP_031663"/>
    </isoform>
    <isoform>
        <id>Q8BFS6-4</id>
        <name>4</name>
        <sequence type="described" ref="VSP_031664 VSP_031665"/>
    </isoform>
    <isoform>
        <id>Q8BFS6-5</id>
        <name>5</name>
        <sequence type="described" ref="VSP_031659 VSP_031662"/>
    </isoform>
</comment>
<comment type="similarity">
    <text evidence="5">Belongs to the metallophosphoesterase superfamily. CPPED1 family.</text>
</comment>
<comment type="sequence caution" evidence="5">
    <conflict type="erroneous initiation">
        <sequence resource="EMBL-CDS" id="AAH25476"/>
    </conflict>
</comment>
<reference key="1">
    <citation type="journal article" date="2005" name="Science">
        <title>The transcriptional landscape of the mammalian genome.</title>
        <authorList>
            <person name="Carninci P."/>
            <person name="Kasukawa T."/>
            <person name="Katayama S."/>
            <person name="Gough J."/>
            <person name="Frith M.C."/>
            <person name="Maeda N."/>
            <person name="Oyama R."/>
            <person name="Ravasi T."/>
            <person name="Lenhard B."/>
            <person name="Wells C."/>
            <person name="Kodzius R."/>
            <person name="Shimokawa K."/>
            <person name="Bajic V.B."/>
            <person name="Brenner S.E."/>
            <person name="Batalov S."/>
            <person name="Forrest A.R."/>
            <person name="Zavolan M."/>
            <person name="Davis M.J."/>
            <person name="Wilming L.G."/>
            <person name="Aidinis V."/>
            <person name="Allen J.E."/>
            <person name="Ambesi-Impiombato A."/>
            <person name="Apweiler R."/>
            <person name="Aturaliya R.N."/>
            <person name="Bailey T.L."/>
            <person name="Bansal M."/>
            <person name="Baxter L."/>
            <person name="Beisel K.W."/>
            <person name="Bersano T."/>
            <person name="Bono H."/>
            <person name="Chalk A.M."/>
            <person name="Chiu K.P."/>
            <person name="Choudhary V."/>
            <person name="Christoffels A."/>
            <person name="Clutterbuck D.R."/>
            <person name="Crowe M.L."/>
            <person name="Dalla E."/>
            <person name="Dalrymple B.P."/>
            <person name="de Bono B."/>
            <person name="Della Gatta G."/>
            <person name="di Bernardo D."/>
            <person name="Down T."/>
            <person name="Engstrom P."/>
            <person name="Fagiolini M."/>
            <person name="Faulkner G."/>
            <person name="Fletcher C.F."/>
            <person name="Fukushima T."/>
            <person name="Furuno M."/>
            <person name="Futaki S."/>
            <person name="Gariboldi M."/>
            <person name="Georgii-Hemming P."/>
            <person name="Gingeras T.R."/>
            <person name="Gojobori T."/>
            <person name="Green R.E."/>
            <person name="Gustincich S."/>
            <person name="Harbers M."/>
            <person name="Hayashi Y."/>
            <person name="Hensch T.K."/>
            <person name="Hirokawa N."/>
            <person name="Hill D."/>
            <person name="Huminiecki L."/>
            <person name="Iacono M."/>
            <person name="Ikeo K."/>
            <person name="Iwama A."/>
            <person name="Ishikawa T."/>
            <person name="Jakt M."/>
            <person name="Kanapin A."/>
            <person name="Katoh M."/>
            <person name="Kawasawa Y."/>
            <person name="Kelso J."/>
            <person name="Kitamura H."/>
            <person name="Kitano H."/>
            <person name="Kollias G."/>
            <person name="Krishnan S.P."/>
            <person name="Kruger A."/>
            <person name="Kummerfeld S.K."/>
            <person name="Kurochkin I.V."/>
            <person name="Lareau L.F."/>
            <person name="Lazarevic D."/>
            <person name="Lipovich L."/>
            <person name="Liu J."/>
            <person name="Liuni S."/>
            <person name="McWilliam S."/>
            <person name="Madan Babu M."/>
            <person name="Madera M."/>
            <person name="Marchionni L."/>
            <person name="Matsuda H."/>
            <person name="Matsuzawa S."/>
            <person name="Miki H."/>
            <person name="Mignone F."/>
            <person name="Miyake S."/>
            <person name="Morris K."/>
            <person name="Mottagui-Tabar S."/>
            <person name="Mulder N."/>
            <person name="Nakano N."/>
            <person name="Nakauchi H."/>
            <person name="Ng P."/>
            <person name="Nilsson R."/>
            <person name="Nishiguchi S."/>
            <person name="Nishikawa S."/>
            <person name="Nori F."/>
            <person name="Ohara O."/>
            <person name="Okazaki Y."/>
            <person name="Orlando V."/>
            <person name="Pang K.C."/>
            <person name="Pavan W.J."/>
            <person name="Pavesi G."/>
            <person name="Pesole G."/>
            <person name="Petrovsky N."/>
            <person name="Piazza S."/>
            <person name="Reed J."/>
            <person name="Reid J.F."/>
            <person name="Ring B.Z."/>
            <person name="Ringwald M."/>
            <person name="Rost B."/>
            <person name="Ruan Y."/>
            <person name="Salzberg S.L."/>
            <person name="Sandelin A."/>
            <person name="Schneider C."/>
            <person name="Schoenbach C."/>
            <person name="Sekiguchi K."/>
            <person name="Semple C.A."/>
            <person name="Seno S."/>
            <person name="Sessa L."/>
            <person name="Sheng Y."/>
            <person name="Shibata Y."/>
            <person name="Shimada H."/>
            <person name="Shimada K."/>
            <person name="Silva D."/>
            <person name="Sinclair B."/>
            <person name="Sperling S."/>
            <person name="Stupka E."/>
            <person name="Sugiura K."/>
            <person name="Sultana R."/>
            <person name="Takenaka Y."/>
            <person name="Taki K."/>
            <person name="Tammoja K."/>
            <person name="Tan S.L."/>
            <person name="Tang S."/>
            <person name="Taylor M.S."/>
            <person name="Tegner J."/>
            <person name="Teichmann S.A."/>
            <person name="Ueda H.R."/>
            <person name="van Nimwegen E."/>
            <person name="Verardo R."/>
            <person name="Wei C.L."/>
            <person name="Yagi K."/>
            <person name="Yamanishi H."/>
            <person name="Zabarovsky E."/>
            <person name="Zhu S."/>
            <person name="Zimmer A."/>
            <person name="Hide W."/>
            <person name="Bult C."/>
            <person name="Grimmond S.M."/>
            <person name="Teasdale R.D."/>
            <person name="Liu E.T."/>
            <person name="Brusic V."/>
            <person name="Quackenbush J."/>
            <person name="Wahlestedt C."/>
            <person name="Mattick J.S."/>
            <person name="Hume D.A."/>
            <person name="Kai C."/>
            <person name="Sasaki D."/>
            <person name="Tomaru Y."/>
            <person name="Fukuda S."/>
            <person name="Kanamori-Katayama M."/>
            <person name="Suzuki M."/>
            <person name="Aoki J."/>
            <person name="Arakawa T."/>
            <person name="Iida J."/>
            <person name="Imamura K."/>
            <person name="Itoh M."/>
            <person name="Kato T."/>
            <person name="Kawaji H."/>
            <person name="Kawagashira N."/>
            <person name="Kawashima T."/>
            <person name="Kojima M."/>
            <person name="Kondo S."/>
            <person name="Konno H."/>
            <person name="Nakano K."/>
            <person name="Ninomiya N."/>
            <person name="Nishio T."/>
            <person name="Okada M."/>
            <person name="Plessy C."/>
            <person name="Shibata K."/>
            <person name="Shiraki T."/>
            <person name="Suzuki S."/>
            <person name="Tagami M."/>
            <person name="Waki K."/>
            <person name="Watahiki A."/>
            <person name="Okamura-Oho Y."/>
            <person name="Suzuki H."/>
            <person name="Kawai J."/>
            <person name="Hayashizaki Y."/>
        </authorList>
    </citation>
    <scope>NUCLEOTIDE SEQUENCE [LARGE SCALE MRNA] (ISOFORMS 1; 2; 3 AND 4)</scope>
    <source>
        <strain>C57BL/6J</strain>
        <tissue>Adipose tissue</tissue>
        <tissue>Medulla oblongata</tissue>
        <tissue>Olfactory bulb</tissue>
        <tissue>Spinal cord</tissue>
        <tissue>Thymus</tissue>
    </source>
</reference>
<reference key="2">
    <citation type="journal article" date="2004" name="Genome Res.">
        <title>The status, quality, and expansion of the NIH full-length cDNA project: the Mammalian Gene Collection (MGC).</title>
        <authorList>
            <consortium name="The MGC Project Team"/>
        </authorList>
    </citation>
    <scope>NUCLEOTIDE SEQUENCE [LARGE SCALE MRNA] (ISOFORM 5)</scope>
    <scope>NUCLEOTIDE SEQUENCE [LARGE SCALE MRNA] OF 2-312 (ISOFORM 1)</scope>
    <source>
        <strain>FVB/N</strain>
        <strain>FVB/N-3</strain>
        <tissue>Mammary tumor</tissue>
    </source>
</reference>
<reference key="3">
    <citation type="journal article" date="2010" name="Cell">
        <title>A tissue-specific atlas of mouse protein phosphorylation and expression.</title>
        <authorList>
            <person name="Huttlin E.L."/>
            <person name="Jedrychowski M.P."/>
            <person name="Elias J.E."/>
            <person name="Goswami T."/>
            <person name="Rad R."/>
            <person name="Beausoleil S.A."/>
            <person name="Villen J."/>
            <person name="Haas W."/>
            <person name="Sowa M.E."/>
            <person name="Gygi S.P."/>
        </authorList>
    </citation>
    <scope>IDENTIFICATION BY MASS SPECTROMETRY [LARGE SCALE ANALYSIS]</scope>
    <source>
        <tissue>Brain</tissue>
        <tissue>Brown adipose tissue</tissue>
        <tissue>Heart</tissue>
        <tissue>Kidney</tissue>
        <tissue>Liver</tissue>
        <tissue>Lung</tissue>
        <tissue>Testis</tissue>
    </source>
</reference>
<protein>
    <recommendedName>
        <fullName>Serine/threonine-protein phosphatase CPPED1</fullName>
        <ecNumber>3.1.3.16</ecNumber>
    </recommendedName>
    <alternativeName>
        <fullName>Calcineurin-like phosphoesterase domain-containing protein 1</fullName>
    </alternativeName>
</protein>
<feature type="chain" id="PRO_0000320557" description="Serine/threonine-protein phosphatase CPPED1">
    <location>
        <begin position="1"/>
        <end position="312"/>
    </location>
</feature>
<feature type="region of interest" description="Catalytic" evidence="1">
    <location>
        <begin position="47"/>
        <end position="250"/>
    </location>
</feature>
<feature type="binding site" evidence="1">
    <location>
        <position position="90"/>
    </location>
    <ligand>
        <name>a divalent metal cation</name>
        <dbReference type="ChEBI" id="CHEBI:60240"/>
        <label>1</label>
    </ligand>
</feature>
<feature type="binding site" evidence="1">
    <location>
        <position position="90"/>
    </location>
    <ligand>
        <name>a divalent metal cation</name>
        <dbReference type="ChEBI" id="CHEBI:60240"/>
        <label>2</label>
    </ligand>
</feature>
<feature type="binding site" evidence="1">
    <location>
        <position position="127"/>
    </location>
    <ligand>
        <name>a divalent metal cation</name>
        <dbReference type="ChEBI" id="CHEBI:60240"/>
        <label>2</label>
    </ligand>
</feature>
<feature type="binding site" evidence="1">
    <location>
        <position position="246"/>
    </location>
    <ligand>
        <name>a divalent metal cation</name>
        <dbReference type="ChEBI" id="CHEBI:60240"/>
        <label>2</label>
    </ligand>
</feature>
<feature type="modified residue" description="Phosphoserine" evidence="2">
    <location>
        <position position="2"/>
    </location>
</feature>
<feature type="modified residue" description="Phosphoserine" evidence="2">
    <location>
        <position position="293"/>
    </location>
</feature>
<feature type="splice variant" id="VSP_031659" description="In isoform 5." evidence="3">
    <location>
        <begin position="1"/>
        <end position="138"/>
    </location>
</feature>
<feature type="splice variant" id="VSP_031660" description="In isoform 2." evidence="4">
    <location>
        <begin position="24"/>
        <end position="37"/>
    </location>
</feature>
<feature type="splice variant" id="VSP_031661" description="In isoform 3." evidence="4">
    <original>TPWRQEQTRDLQRVLKAVDQDIPLVMVSGNHDLGNAPTAETVEEFCQTWGDDYFSF</original>
    <variation>GKGKAGGKRKGASEEEPEEEVLGYISSRCFWNSLPSPRPSLSTVLSQAGPQPRDQV</variation>
    <location>
        <begin position="98"/>
        <end position="153"/>
    </location>
</feature>
<feature type="splice variant" id="VSP_031662" description="In isoform 5." evidence="3">
    <original>VEEFCQTWGDDYFSFWVGGVLF</original>
    <variation>MERSILLRPRRRHSVWTDEG</variation>
    <location>
        <begin position="139"/>
        <end position="160"/>
    </location>
</feature>
<feature type="splice variant" id="VSP_031663" description="In isoform 3." evidence="4">
    <location>
        <begin position="154"/>
        <end position="312"/>
    </location>
</feature>
<feature type="splice variant" id="VSP_031664" description="In isoform 4." evidence="4">
    <original>IRAVFSGHYHRNAGGTYQNLDMVVSSAI</original>
    <variation>NAWGMCMCQPPSATWRSEEGTRLGWDRF</variation>
    <location>
        <begin position="239"/>
        <end position="266"/>
    </location>
</feature>
<feature type="splice variant" id="VSP_031665" description="In isoform 4." evidence="4">
    <location>
        <begin position="267"/>
        <end position="312"/>
    </location>
</feature>
<evidence type="ECO:0000250" key="1"/>
<evidence type="ECO:0000250" key="2">
    <source>
        <dbReference type="UniProtKB" id="Q9BRF8"/>
    </source>
</evidence>
<evidence type="ECO:0000303" key="3">
    <source>
    </source>
</evidence>
<evidence type="ECO:0000303" key="4">
    <source>
    </source>
</evidence>
<evidence type="ECO:0000305" key="5"/>